<gene>
    <name evidence="1" type="primary">glyS</name>
    <name type="ordered locus">ECIAI39_4067</name>
</gene>
<organism>
    <name type="scientific">Escherichia coli O7:K1 (strain IAI39 / ExPEC)</name>
    <dbReference type="NCBI Taxonomy" id="585057"/>
    <lineage>
        <taxon>Bacteria</taxon>
        <taxon>Pseudomonadati</taxon>
        <taxon>Pseudomonadota</taxon>
        <taxon>Gammaproteobacteria</taxon>
        <taxon>Enterobacterales</taxon>
        <taxon>Enterobacteriaceae</taxon>
        <taxon>Escherichia</taxon>
    </lineage>
</organism>
<comment type="catalytic activity">
    <reaction evidence="1">
        <text>tRNA(Gly) + glycine + ATP = glycyl-tRNA(Gly) + AMP + diphosphate</text>
        <dbReference type="Rhea" id="RHEA:16013"/>
        <dbReference type="Rhea" id="RHEA-COMP:9664"/>
        <dbReference type="Rhea" id="RHEA-COMP:9683"/>
        <dbReference type="ChEBI" id="CHEBI:30616"/>
        <dbReference type="ChEBI" id="CHEBI:33019"/>
        <dbReference type="ChEBI" id="CHEBI:57305"/>
        <dbReference type="ChEBI" id="CHEBI:78442"/>
        <dbReference type="ChEBI" id="CHEBI:78522"/>
        <dbReference type="ChEBI" id="CHEBI:456215"/>
        <dbReference type="EC" id="6.1.1.14"/>
    </reaction>
</comment>
<comment type="subunit">
    <text evidence="1">Tetramer of two alpha and two beta subunits.</text>
</comment>
<comment type="subcellular location">
    <subcellularLocation>
        <location evidence="1">Cytoplasm</location>
    </subcellularLocation>
</comment>
<comment type="similarity">
    <text evidence="1">Belongs to the class-II aminoacyl-tRNA synthetase family.</text>
</comment>
<dbReference type="EC" id="6.1.1.14" evidence="1"/>
<dbReference type="EMBL" id="CU928164">
    <property type="protein sequence ID" value="CAR20175.1"/>
    <property type="molecule type" value="Genomic_DNA"/>
</dbReference>
<dbReference type="RefSeq" id="WP_001291797.1">
    <property type="nucleotide sequence ID" value="NC_011750.1"/>
</dbReference>
<dbReference type="RefSeq" id="YP_002409953.1">
    <property type="nucleotide sequence ID" value="NC_011750.1"/>
</dbReference>
<dbReference type="SMR" id="B7NP55"/>
<dbReference type="STRING" id="585057.ECIAI39_4067"/>
<dbReference type="KEGG" id="ect:ECIAI39_4067"/>
<dbReference type="PATRIC" id="fig|585057.6.peg.4216"/>
<dbReference type="HOGENOM" id="CLU_007220_2_2_6"/>
<dbReference type="Proteomes" id="UP000000749">
    <property type="component" value="Chromosome"/>
</dbReference>
<dbReference type="GO" id="GO:0005829">
    <property type="term" value="C:cytosol"/>
    <property type="evidence" value="ECO:0007669"/>
    <property type="project" value="TreeGrafter"/>
</dbReference>
<dbReference type="GO" id="GO:0004814">
    <property type="term" value="F:arginine-tRNA ligase activity"/>
    <property type="evidence" value="ECO:0007669"/>
    <property type="project" value="InterPro"/>
</dbReference>
<dbReference type="GO" id="GO:0005524">
    <property type="term" value="F:ATP binding"/>
    <property type="evidence" value="ECO:0007669"/>
    <property type="project" value="UniProtKB-UniRule"/>
</dbReference>
<dbReference type="GO" id="GO:0004820">
    <property type="term" value="F:glycine-tRNA ligase activity"/>
    <property type="evidence" value="ECO:0007669"/>
    <property type="project" value="UniProtKB-UniRule"/>
</dbReference>
<dbReference type="GO" id="GO:0006420">
    <property type="term" value="P:arginyl-tRNA aminoacylation"/>
    <property type="evidence" value="ECO:0007669"/>
    <property type="project" value="InterPro"/>
</dbReference>
<dbReference type="GO" id="GO:0006426">
    <property type="term" value="P:glycyl-tRNA aminoacylation"/>
    <property type="evidence" value="ECO:0007669"/>
    <property type="project" value="UniProtKB-UniRule"/>
</dbReference>
<dbReference type="HAMAP" id="MF_00255">
    <property type="entry name" value="Gly_tRNA_synth_beta"/>
    <property type="match status" value="1"/>
</dbReference>
<dbReference type="InterPro" id="IPR008909">
    <property type="entry name" value="DALR_anticod-bd"/>
</dbReference>
<dbReference type="InterPro" id="IPR015944">
    <property type="entry name" value="Gly-tRNA-synth_bsu"/>
</dbReference>
<dbReference type="InterPro" id="IPR006194">
    <property type="entry name" value="Gly-tRNA-synth_heterodimer"/>
</dbReference>
<dbReference type="NCBIfam" id="TIGR00211">
    <property type="entry name" value="glyS"/>
    <property type="match status" value="1"/>
</dbReference>
<dbReference type="PANTHER" id="PTHR30075:SF2">
    <property type="entry name" value="GLYCINE--TRNA LIGASE, CHLOROPLASTIC_MITOCHONDRIAL 2"/>
    <property type="match status" value="1"/>
</dbReference>
<dbReference type="PANTHER" id="PTHR30075">
    <property type="entry name" value="GLYCYL-TRNA SYNTHETASE"/>
    <property type="match status" value="1"/>
</dbReference>
<dbReference type="Pfam" id="PF05746">
    <property type="entry name" value="DALR_1"/>
    <property type="match status" value="1"/>
</dbReference>
<dbReference type="Pfam" id="PF02092">
    <property type="entry name" value="tRNA_synt_2f"/>
    <property type="match status" value="1"/>
</dbReference>
<dbReference type="PRINTS" id="PR01045">
    <property type="entry name" value="TRNASYNTHGB"/>
</dbReference>
<dbReference type="SUPFAM" id="SSF109604">
    <property type="entry name" value="HD-domain/PDEase-like"/>
    <property type="match status" value="1"/>
</dbReference>
<dbReference type="PROSITE" id="PS50861">
    <property type="entry name" value="AA_TRNA_LIGASE_II_GLYAB"/>
    <property type="match status" value="1"/>
</dbReference>
<accession>B7NP55</accession>
<protein>
    <recommendedName>
        <fullName evidence="1">Glycine--tRNA ligase beta subunit</fullName>
        <ecNumber evidence="1">6.1.1.14</ecNumber>
    </recommendedName>
    <alternativeName>
        <fullName evidence="1">Glycyl-tRNA synthetase beta subunit</fullName>
        <shortName evidence="1">GlyRS</shortName>
    </alternativeName>
</protein>
<reference key="1">
    <citation type="journal article" date="2009" name="PLoS Genet.">
        <title>Organised genome dynamics in the Escherichia coli species results in highly diverse adaptive paths.</title>
        <authorList>
            <person name="Touchon M."/>
            <person name="Hoede C."/>
            <person name="Tenaillon O."/>
            <person name="Barbe V."/>
            <person name="Baeriswyl S."/>
            <person name="Bidet P."/>
            <person name="Bingen E."/>
            <person name="Bonacorsi S."/>
            <person name="Bouchier C."/>
            <person name="Bouvet O."/>
            <person name="Calteau A."/>
            <person name="Chiapello H."/>
            <person name="Clermont O."/>
            <person name="Cruveiller S."/>
            <person name="Danchin A."/>
            <person name="Diard M."/>
            <person name="Dossat C."/>
            <person name="Karoui M.E."/>
            <person name="Frapy E."/>
            <person name="Garry L."/>
            <person name="Ghigo J.M."/>
            <person name="Gilles A.M."/>
            <person name="Johnson J."/>
            <person name="Le Bouguenec C."/>
            <person name="Lescat M."/>
            <person name="Mangenot S."/>
            <person name="Martinez-Jehanne V."/>
            <person name="Matic I."/>
            <person name="Nassif X."/>
            <person name="Oztas S."/>
            <person name="Petit M.A."/>
            <person name="Pichon C."/>
            <person name="Rouy Z."/>
            <person name="Ruf C.S."/>
            <person name="Schneider D."/>
            <person name="Tourret J."/>
            <person name="Vacherie B."/>
            <person name="Vallenet D."/>
            <person name="Medigue C."/>
            <person name="Rocha E.P.C."/>
            <person name="Denamur E."/>
        </authorList>
    </citation>
    <scope>NUCLEOTIDE SEQUENCE [LARGE SCALE GENOMIC DNA]</scope>
    <source>
        <strain>IAI39 / ExPEC</strain>
    </source>
</reference>
<name>SYGB_ECO7I</name>
<keyword id="KW-0030">Aminoacyl-tRNA synthetase</keyword>
<keyword id="KW-0067">ATP-binding</keyword>
<keyword id="KW-0963">Cytoplasm</keyword>
<keyword id="KW-0436">Ligase</keyword>
<keyword id="KW-0547">Nucleotide-binding</keyword>
<keyword id="KW-0648">Protein biosynthesis</keyword>
<evidence type="ECO:0000255" key="1">
    <source>
        <dbReference type="HAMAP-Rule" id="MF_00255"/>
    </source>
</evidence>
<proteinExistence type="inferred from homology"/>
<feature type="chain" id="PRO_1000197195" description="Glycine--tRNA ligase beta subunit">
    <location>
        <begin position="1"/>
        <end position="689"/>
    </location>
</feature>
<sequence length="689" mass="76789">MSEKTFLVEIGTEELPPKALRSLAESFAANFTAELDNAGLAHGTVQWFAAPRRLALKVANLAEAQPDREIEKRGPAIAQAFDAEGKPSKAAEGWARGCGITVDQAERLTTDKGEWLLYRAHVKGESTEALLPNMVATSLAKLPIPKLMRWGASDVHFVRPVHTVTLLLGDKVIPATILGIQSDRVIRGHRFMGESEFTIDNADQYPEILRERGKVIADYEERKAKIKADAEEAARKIGGNADLSESLLEEVASLVEWPVVLTAKFEEKFLAVPSEALVYTMKGDQKYFPVYANDGKLLPNFIFVANIESKDPQQIISGNEKVVRPRLADAEFFFNTDRKKRLEDNLPRLQTVLFQQQLGTLRDKTDRIQALAGWIAEQIGADVNHATRAGLLSKCDLMTNMVFEFTDTQGVMGMHYARHDGEAEDVAVALNEQYQPRFAGDDLPSNPVACALAIADKMDTLAGIFGIGQHPKGDKDPFALRRAALGVLRIIVEKNLNLDLQTLTEEAVRLYGDKLTNANVVDDVIDFMLGRFRAWYQDEGYTVDTIQAVLARRPTRPADFDARMKAVSHFRTLDAAAALAAANKRVSNILAKSDEVLSDRVNASTLKEPEEIKLAMQVVVLRDKLEPYFAEGRYQDALVELAELREPVDAFFDKVMVMVDDKELRINRLTMLEKLRELFLRVADISLLQ</sequence>